<keyword id="KW-0053">Apoptosis</keyword>
<keyword id="KW-0333">Golgi apparatus</keyword>
<keyword id="KW-0418">Kinase</keyword>
<keyword id="KW-0443">Lipid metabolism</keyword>
<keyword id="KW-0472">Membrane</keyword>
<keyword id="KW-0597">Phosphoprotein</keyword>
<keyword id="KW-1185">Reference proteome</keyword>
<keyword id="KW-0746">Sphingolipid metabolism</keyword>
<keyword id="KW-0808">Transferase</keyword>
<keyword id="KW-0812">Transmembrane</keyword>
<keyword id="KW-1133">Transmembrane helix</keyword>
<feature type="chain" id="PRO_0000221070" description="Phosphatidylcholine:ceramide cholinephosphotransferase 1">
    <location>
        <begin position="1"/>
        <end position="419"/>
    </location>
</feature>
<feature type="transmembrane region" description="Helical" evidence="3">
    <location>
        <begin position="142"/>
        <end position="162"/>
    </location>
</feature>
<feature type="transmembrane region" description="Helical" evidence="3">
    <location>
        <begin position="190"/>
        <end position="210"/>
    </location>
</feature>
<feature type="transmembrane region" description="Helical" evidence="3">
    <location>
        <begin position="221"/>
        <end position="241"/>
    </location>
</feature>
<feature type="transmembrane region" description="Helical" evidence="3">
    <location>
        <begin position="282"/>
        <end position="302"/>
    </location>
</feature>
<feature type="transmembrane region" description="Helical" evidence="3">
    <location>
        <begin position="310"/>
        <end position="330"/>
    </location>
</feature>
<feature type="topological domain" description="Cytoplasmic" evidence="3">
    <location>
        <begin position="331"/>
        <end position="419"/>
    </location>
</feature>
<feature type="domain" description="SAM" evidence="4 6">
    <location>
        <begin position="13"/>
        <end position="76"/>
    </location>
</feature>
<feature type="active site" evidence="1">
    <location>
        <position position="291"/>
    </location>
</feature>
<feature type="active site" evidence="1">
    <location>
        <position position="334"/>
    </location>
</feature>
<feature type="active site" evidence="1">
    <location>
        <position position="338"/>
    </location>
</feature>
<feature type="modified residue" description="Phosphoserine" evidence="1">
    <location>
        <position position="14"/>
    </location>
</feature>
<proteinExistence type="evidence at transcript level"/>
<evidence type="ECO:0000250" key="1">
    <source>
        <dbReference type="UniProtKB" id="Q86VZ5"/>
    </source>
</evidence>
<evidence type="ECO:0000250" key="2">
    <source>
        <dbReference type="UniProtKB" id="Q8VCQ6"/>
    </source>
</evidence>
<evidence type="ECO:0000255" key="3"/>
<evidence type="ECO:0000255" key="4">
    <source>
        <dbReference type="PROSITE-ProRule" id="PRU00184"/>
    </source>
</evidence>
<evidence type="ECO:0000269" key="5">
    <source>
    </source>
</evidence>
<evidence type="ECO:0000305" key="6"/>
<evidence type="ECO:0000312" key="7">
    <source>
        <dbReference type="EMBL" id="AAP37281.1"/>
    </source>
</evidence>
<sequence length="419" mass="49014">MLSASTMKEVVYWSPKKVADWLLENAMPEYCEPLGHFTGQDLINLTQEDFTKPPLCRVSSDNGQRLLDMIETLKMEHHIEAHKNGHANGHLSIGVDIPNPDGSFSIKIKPNGMPNGFRKEMIKIPMPEPERSQYPMEWGKTLLAFLYALSCFVLTTVMISVVHERVPPKEVQPPLPDTFFDHFNRVQWAFSICEINGMILVGLWLFQWLLLKYKSIISRRFFCIVGTLYLYRCITMYVTTLPVPGMHFNCSPKLFGDWEAQVRRIMKLIAGGGLSITGSHNMCGDYLYSGHTVMLTLTYLFIKEYSPRRLWWYHWICWLLSVVGIFCILLAHDHYTVDVVVAYYITTRLFWWYHTMANQQVLKEASQMNLLARVWWYRPFQYFEKNVQGIVPRSYHWPLPWPVVHLSRQVKYSRLVNDT</sequence>
<protein>
    <recommendedName>
        <fullName>Phosphatidylcholine:ceramide cholinephosphotransferase 1</fullName>
        <ecNumber evidence="1">2.7.8.27</ecNumber>
    </recommendedName>
    <alternativeName>
        <fullName>Protein Mob</fullName>
    </alternativeName>
    <alternativeName>
        <fullName>Sphingomyelin synthase 1</fullName>
    </alternativeName>
    <alternativeName>
        <fullName>Transmembrane protein 23</fullName>
    </alternativeName>
</protein>
<organism evidence="7">
    <name type="scientific">Rattus norvegicus</name>
    <name type="common">Rat</name>
    <dbReference type="NCBI Taxonomy" id="10116"/>
    <lineage>
        <taxon>Eukaryota</taxon>
        <taxon>Metazoa</taxon>
        <taxon>Chordata</taxon>
        <taxon>Craniata</taxon>
        <taxon>Vertebrata</taxon>
        <taxon>Euteleostomi</taxon>
        <taxon>Mammalia</taxon>
        <taxon>Eutheria</taxon>
        <taxon>Euarchontoglires</taxon>
        <taxon>Glires</taxon>
        <taxon>Rodentia</taxon>
        <taxon>Myomorpha</taxon>
        <taxon>Muroidea</taxon>
        <taxon>Muridae</taxon>
        <taxon>Murinae</taxon>
        <taxon>Rattus</taxon>
    </lineage>
</organism>
<dbReference type="EC" id="2.7.8.27" evidence="1"/>
<dbReference type="EMBL" id="AY280961">
    <property type="protein sequence ID" value="AAP37281.1"/>
    <property type="status" value="ALT_INIT"/>
    <property type="molecule type" value="mRNA"/>
</dbReference>
<dbReference type="EMBL" id="BC081693">
    <property type="protein sequence ID" value="AAH81693.1"/>
    <property type="molecule type" value="mRNA"/>
</dbReference>
<dbReference type="RefSeq" id="NP_852051.2">
    <property type="nucleotide sequence ID" value="NM_181386.3"/>
</dbReference>
<dbReference type="RefSeq" id="XP_038936909.1">
    <property type="nucleotide sequence ID" value="XM_039080981.2"/>
</dbReference>
<dbReference type="RefSeq" id="XP_038936911.1">
    <property type="nucleotide sequence ID" value="XM_039080983.2"/>
</dbReference>
<dbReference type="RefSeq" id="XP_038936916.1">
    <property type="nucleotide sequence ID" value="XM_039080988.2"/>
</dbReference>
<dbReference type="RefSeq" id="XP_038936922.1">
    <property type="nucleotide sequence ID" value="XM_039080994.2"/>
</dbReference>
<dbReference type="RefSeq" id="XP_038936925.1">
    <property type="nucleotide sequence ID" value="XM_039080997.2"/>
</dbReference>
<dbReference type="RefSeq" id="XP_038936926.1">
    <property type="nucleotide sequence ID" value="XM_039080998.2"/>
</dbReference>
<dbReference type="RefSeq" id="XP_038936929.1">
    <property type="nucleotide sequence ID" value="XM_039081001.2"/>
</dbReference>
<dbReference type="RefSeq" id="XP_038936937.1">
    <property type="nucleotide sequence ID" value="XM_039081009.2"/>
</dbReference>
<dbReference type="RefSeq" id="XP_063121795.1">
    <property type="nucleotide sequence ID" value="XM_063265725.1"/>
</dbReference>
<dbReference type="RefSeq" id="XP_063121800.1">
    <property type="nucleotide sequence ID" value="XM_063265730.1"/>
</dbReference>
<dbReference type="RefSeq" id="XP_063121802.1">
    <property type="nucleotide sequence ID" value="XM_063265732.1"/>
</dbReference>
<dbReference type="RefSeq" id="XP_063121807.1">
    <property type="nucleotide sequence ID" value="XM_063265737.1"/>
</dbReference>
<dbReference type="RefSeq" id="XP_063121810.1">
    <property type="nucleotide sequence ID" value="XM_063265740.1"/>
</dbReference>
<dbReference type="RefSeq" id="XP_063121813.1">
    <property type="nucleotide sequence ID" value="XM_063265743.1"/>
</dbReference>
<dbReference type="RefSeq" id="XP_063121819.1">
    <property type="nucleotide sequence ID" value="XM_063265749.1"/>
</dbReference>
<dbReference type="RefSeq" id="XP_063121824.1">
    <property type="nucleotide sequence ID" value="XM_063265754.1"/>
</dbReference>
<dbReference type="RefSeq" id="XP_063121829.1">
    <property type="nucleotide sequence ID" value="XM_063265759.1"/>
</dbReference>
<dbReference type="RefSeq" id="XP_063121834.1">
    <property type="nucleotide sequence ID" value="XM_063265764.1"/>
</dbReference>
<dbReference type="RefSeq" id="XP_063121837.1">
    <property type="nucleotide sequence ID" value="XM_063265767.1"/>
</dbReference>
<dbReference type="RefSeq" id="XP_063121840.1">
    <property type="nucleotide sequence ID" value="XM_063265770.1"/>
</dbReference>
<dbReference type="RefSeq" id="XP_063121846.1">
    <property type="nucleotide sequence ID" value="XM_063265776.1"/>
</dbReference>
<dbReference type="RefSeq" id="XP_063121847.1">
    <property type="nucleotide sequence ID" value="XM_063265777.1"/>
</dbReference>
<dbReference type="RefSeq" id="XP_063121851.1">
    <property type="nucleotide sequence ID" value="XM_063265781.1"/>
</dbReference>
<dbReference type="RefSeq" id="XP_063121856.1">
    <property type="nucleotide sequence ID" value="XM_063265786.1"/>
</dbReference>
<dbReference type="RefSeq" id="XP_063121860.1">
    <property type="nucleotide sequence ID" value="XM_063265790.1"/>
</dbReference>
<dbReference type="RefSeq" id="XP_063121863.1">
    <property type="nucleotide sequence ID" value="XM_063265793.1"/>
</dbReference>
<dbReference type="RefSeq" id="XP_063121867.1">
    <property type="nucleotide sequence ID" value="XM_063265797.1"/>
</dbReference>
<dbReference type="SMR" id="Q7TSX5"/>
<dbReference type="FunCoup" id="Q7TSX5">
    <property type="interactions" value="976"/>
</dbReference>
<dbReference type="STRING" id="10116.ENSRNOP00000075286"/>
<dbReference type="PhosphoSitePlus" id="Q7TSX5"/>
<dbReference type="PaxDb" id="10116-ENSRNOP00000051643"/>
<dbReference type="Ensembl" id="ENSRNOT00000054761.2">
    <property type="protein sequence ID" value="ENSRNOP00000051643.1"/>
    <property type="gene ID" value="ENSRNOG00000012536.7"/>
</dbReference>
<dbReference type="GeneID" id="353229"/>
<dbReference type="KEGG" id="rno:353229"/>
<dbReference type="UCSC" id="RGD:727912">
    <property type="organism name" value="rat"/>
</dbReference>
<dbReference type="AGR" id="RGD:727912"/>
<dbReference type="CTD" id="259230"/>
<dbReference type="RGD" id="727912">
    <property type="gene designation" value="Sgms1"/>
</dbReference>
<dbReference type="eggNOG" id="KOG3058">
    <property type="taxonomic scope" value="Eukaryota"/>
</dbReference>
<dbReference type="GeneTree" id="ENSGT00940000158306"/>
<dbReference type="InParanoid" id="Q7TSX5"/>
<dbReference type="OMA" id="HWPLRCP"/>
<dbReference type="OrthoDB" id="422827at2759"/>
<dbReference type="PhylomeDB" id="Q7TSX5"/>
<dbReference type="TreeFam" id="TF314547"/>
<dbReference type="Reactome" id="R-RNO-1660661">
    <property type="pathway name" value="Sphingolipid de novo biosynthesis"/>
</dbReference>
<dbReference type="PRO" id="PR:Q7TSX5"/>
<dbReference type="Proteomes" id="UP000002494">
    <property type="component" value="Chromosome 1"/>
</dbReference>
<dbReference type="Bgee" id="ENSRNOG00000012536">
    <property type="expression patterns" value="Expressed in testis and 19 other cell types or tissues"/>
</dbReference>
<dbReference type="ExpressionAtlas" id="Q7TSX5">
    <property type="expression patterns" value="baseline and differential"/>
</dbReference>
<dbReference type="GO" id="GO:0005789">
    <property type="term" value="C:endoplasmic reticulum membrane"/>
    <property type="evidence" value="ECO:0000318"/>
    <property type="project" value="GO_Central"/>
</dbReference>
<dbReference type="GO" id="GO:0000139">
    <property type="term" value="C:Golgi membrane"/>
    <property type="evidence" value="ECO:0000250"/>
    <property type="project" value="UniProtKB"/>
</dbReference>
<dbReference type="GO" id="GO:0000138">
    <property type="term" value="C:Golgi trans cisterna"/>
    <property type="evidence" value="ECO:0000266"/>
    <property type="project" value="RGD"/>
</dbReference>
<dbReference type="GO" id="GO:0005886">
    <property type="term" value="C:plasma membrane"/>
    <property type="evidence" value="ECO:0000318"/>
    <property type="project" value="GO_Central"/>
</dbReference>
<dbReference type="GO" id="GO:0047493">
    <property type="term" value="F:ceramide cholinephosphotransferase activity"/>
    <property type="evidence" value="ECO:0000250"/>
    <property type="project" value="UniProtKB"/>
</dbReference>
<dbReference type="GO" id="GO:0002950">
    <property type="term" value="F:ceramide phosphoethanolamine synthase activity"/>
    <property type="evidence" value="ECO:0000266"/>
    <property type="project" value="RGD"/>
</dbReference>
<dbReference type="GO" id="GO:0016301">
    <property type="term" value="F:kinase activity"/>
    <property type="evidence" value="ECO:0007669"/>
    <property type="project" value="UniProtKB-KW"/>
</dbReference>
<dbReference type="GO" id="GO:0033188">
    <property type="term" value="F:sphingomyelin synthase activity"/>
    <property type="evidence" value="ECO:0000250"/>
    <property type="project" value="HGNC-UCL"/>
</dbReference>
<dbReference type="GO" id="GO:0006915">
    <property type="term" value="P:apoptotic process"/>
    <property type="evidence" value="ECO:0007669"/>
    <property type="project" value="UniProtKB-KW"/>
</dbReference>
<dbReference type="GO" id="GO:0071222">
    <property type="term" value="P:cellular response to lipopolysaccharide"/>
    <property type="evidence" value="ECO:0000270"/>
    <property type="project" value="RGD"/>
</dbReference>
<dbReference type="GO" id="GO:0071356">
    <property type="term" value="P:cellular response to tumor necrosis factor"/>
    <property type="evidence" value="ECO:0000270"/>
    <property type="project" value="RGD"/>
</dbReference>
<dbReference type="GO" id="GO:0046513">
    <property type="term" value="P:ceramide biosynthetic process"/>
    <property type="evidence" value="ECO:0000266"/>
    <property type="project" value="RGD"/>
</dbReference>
<dbReference type="GO" id="GO:0010628">
    <property type="term" value="P:positive regulation of gene expression"/>
    <property type="evidence" value="ECO:0000314"/>
    <property type="project" value="RGD"/>
</dbReference>
<dbReference type="GO" id="GO:0006686">
    <property type="term" value="P:sphingomyelin biosynthetic process"/>
    <property type="evidence" value="ECO:0000250"/>
    <property type="project" value="HGNC-UCL"/>
</dbReference>
<dbReference type="CDD" id="cd01610">
    <property type="entry name" value="PAP2_like"/>
    <property type="match status" value="1"/>
</dbReference>
<dbReference type="CDD" id="cd09514">
    <property type="entry name" value="SAM_SGMS1"/>
    <property type="match status" value="1"/>
</dbReference>
<dbReference type="FunFam" id="1.10.150.50:FF:000040">
    <property type="entry name" value="Phosphatidylcholine:ceramide cholinephosphotransferase 1"/>
    <property type="match status" value="1"/>
</dbReference>
<dbReference type="Gene3D" id="1.10.150.50">
    <property type="entry name" value="Transcription Factor, Ets-1"/>
    <property type="match status" value="1"/>
</dbReference>
<dbReference type="InterPro" id="IPR001660">
    <property type="entry name" value="SAM"/>
</dbReference>
<dbReference type="InterPro" id="IPR013761">
    <property type="entry name" value="SAM/pointed_sf"/>
</dbReference>
<dbReference type="InterPro" id="IPR045221">
    <property type="entry name" value="Sphingomyelin_synth-like"/>
</dbReference>
<dbReference type="InterPro" id="IPR025749">
    <property type="entry name" value="Sphingomyelin_synth-like_dom"/>
</dbReference>
<dbReference type="PANTHER" id="PTHR21290:SF28">
    <property type="entry name" value="PHOSPHATIDYLCHOLINE:CERAMIDE CHOLINEPHOSPHOTRANSFERASE 1"/>
    <property type="match status" value="1"/>
</dbReference>
<dbReference type="PANTHER" id="PTHR21290">
    <property type="entry name" value="SPHINGOMYELIN SYNTHETASE"/>
    <property type="match status" value="1"/>
</dbReference>
<dbReference type="Pfam" id="PF14360">
    <property type="entry name" value="PAP2_C"/>
    <property type="match status" value="1"/>
</dbReference>
<dbReference type="SUPFAM" id="SSF47769">
    <property type="entry name" value="SAM/Pointed domain"/>
    <property type="match status" value="1"/>
</dbReference>
<dbReference type="PROSITE" id="PS50105">
    <property type="entry name" value="SAM_DOMAIN"/>
    <property type="match status" value="1"/>
</dbReference>
<name>SMS1_RAT</name>
<accession>Q7TSX5</accession>
<reference key="1">
    <citation type="submission" date="2003-04" db="EMBL/GenBank/DDBJ databases">
        <title>Complete cDNA sequence of a novel gene, rat mob.</title>
        <authorList>
            <person name="Yuan H.F."/>
            <person name="Wang X."/>
            <person name="Wang D.M."/>
            <person name="Li H.M."/>
            <person name="Feng K."/>
            <person name="Bai C.X."/>
            <person name="Zhang R."/>
            <person name="Chen L."/>
            <person name="Li Y.H."/>
            <person name="Gao Y.H."/>
            <person name="Zhen M."/>
            <person name="Yue W."/>
            <person name="Xie C."/>
            <person name="Xie X.Y."/>
            <person name="Niu L.L."/>
            <person name="Yue W."/>
            <person name="Zhang J."/>
            <person name="Cao H."/>
            <person name="Pei X.T."/>
        </authorList>
    </citation>
    <scope>NUCLEOTIDE SEQUENCE [MRNA]</scope>
    <source>
        <strain>Wistar</strain>
        <tissue>Heart</tissue>
    </source>
</reference>
<reference key="2">
    <citation type="journal article" date="2004" name="Genome Res.">
        <title>The status, quality, and expansion of the NIH full-length cDNA project: the Mammalian Gene Collection (MGC).</title>
        <authorList>
            <consortium name="The MGC Project Team"/>
        </authorList>
    </citation>
    <scope>NUCLEOTIDE SEQUENCE [LARGE SCALE MRNA]</scope>
    <source>
        <tissue>Testis</tissue>
    </source>
</reference>
<reference key="3">
    <citation type="journal article" date="2011" name="PLoS ONE">
        <title>Sphingomyelin synthases regulate protein trafficking and secretion.</title>
        <authorList>
            <person name="Subathra M."/>
            <person name="Qureshi A."/>
            <person name="Luberto C."/>
        </authorList>
    </citation>
    <scope>FUNCTION</scope>
</reference>
<comment type="function">
    <text evidence="1 2 5">Major sphingomyelin synthase at the Golgi apparatus. Catalyzes the reversible transfer of phosphocholine moiety in sphingomyelin biosynthesis: in the forward reaction transfers phosphocholine head group of phosphatidylcholine (PC) on to ceramide (CER) to form ceramide phosphocholine (sphingomyelin, SM) and diacylglycerol (DAG) as by-product, and in the reverse reaction transfers phosphocholine from SM to DAG to form PC and CER. The direction of the reaction depends on the levels of CER and DAG in Golgi membranes. Converts the newly synthesized CER, that is transported from the endoplasmic reticulum to the trans-Golgi by the Cer transport protein (CERT), to SM. Can form a heteromeric complex with glucosylceramide synthase (GCS) increasing SMS activity and reducing glucosylceramide synthesis, a critical mechanism that controls the metabolic fate of CER in the Golgi (By similarity). Does not use free phosphorylcholine or CDP-choline as donor. Can also transfer phosphoethanolamine head group of phosphatidylethanolamine (PE) on to CER to form ceramide phosphoethanolamine (CPE) (By similarity). Regulates receptor-mediated signal transduction via mitogenic DAG and proapoptotic CER, as well as via SM, a structural component of membrane rafts that serve as platforms for signal transduction and protein sorting. Plays a role in secretory transport via regulation of DAG pool at the Golgi apparatus and its downstream effects on PRKD1 (PubMed:21980337).</text>
</comment>
<comment type="catalytic activity">
    <reaction evidence="1">
        <text>an N-acylsphing-4-enine + a 1,2-diacyl-sn-glycero-3-phosphocholine = a sphingomyelin + a 1,2-diacyl-sn-glycerol</text>
        <dbReference type="Rhea" id="RHEA:18765"/>
        <dbReference type="ChEBI" id="CHEBI:17636"/>
        <dbReference type="ChEBI" id="CHEBI:17815"/>
        <dbReference type="ChEBI" id="CHEBI:52639"/>
        <dbReference type="ChEBI" id="CHEBI:57643"/>
        <dbReference type="EC" id="2.7.8.27"/>
    </reaction>
    <physiologicalReaction direction="left-to-right" evidence="1">
        <dbReference type="Rhea" id="RHEA:18766"/>
    </physiologicalReaction>
    <physiologicalReaction direction="right-to-left" evidence="1">
        <dbReference type="Rhea" id="RHEA:18767"/>
    </physiologicalReaction>
</comment>
<comment type="catalytic activity">
    <reaction evidence="1">
        <text>1-(9Z-octadecenoyl)-2-acyl-sn-3-glycerol + a sphingomyelin = a 1-(9Z-octadecenoyl)-2-acyl-sn-glycero-3-phosphocholine + an N-acylsphing-4-enine</text>
        <dbReference type="Rhea" id="RHEA:43320"/>
        <dbReference type="ChEBI" id="CHEBI:17636"/>
        <dbReference type="ChEBI" id="CHEBI:52639"/>
        <dbReference type="ChEBI" id="CHEBI:78421"/>
        <dbReference type="ChEBI" id="CHEBI:82983"/>
    </reaction>
    <physiologicalReaction direction="left-to-right" evidence="1">
        <dbReference type="Rhea" id="RHEA:43321"/>
    </physiologicalReaction>
    <physiologicalReaction direction="right-to-left" evidence="1">
        <dbReference type="Rhea" id="RHEA:43322"/>
    </physiologicalReaction>
</comment>
<comment type="catalytic activity">
    <reaction evidence="1">
        <text>N-hexadecanoylsphinganine + a 1,2-diacyl-sn-glycero-3-phosphocholine = N-hexadecanoyl-sphinganine-1-phosphocholine + a 1,2-diacyl-sn-glycerol</text>
        <dbReference type="Rhea" id="RHEA:41796"/>
        <dbReference type="ChEBI" id="CHEBI:17815"/>
        <dbReference type="ChEBI" id="CHEBI:57643"/>
        <dbReference type="ChEBI" id="CHEBI:67042"/>
        <dbReference type="ChEBI" id="CHEBI:78647"/>
    </reaction>
    <physiologicalReaction direction="left-to-right" evidence="1">
        <dbReference type="Rhea" id="RHEA:41797"/>
    </physiologicalReaction>
    <physiologicalReaction direction="right-to-left" evidence="1">
        <dbReference type="Rhea" id="RHEA:41798"/>
    </physiologicalReaction>
</comment>
<comment type="catalytic activity">
    <reaction evidence="1">
        <text>N-hexadecanoyl-(4R)-hydroxysphinganine + a 1,2-diacyl-sn-glycero-3-phosphocholine = N-hexadecanoyl-(4R)-hydroxysphinganine-phosphocholine + a 1,2-diacyl-sn-glycerol</text>
        <dbReference type="Rhea" id="RHEA:42140"/>
        <dbReference type="ChEBI" id="CHEBI:17815"/>
        <dbReference type="ChEBI" id="CHEBI:57643"/>
        <dbReference type="ChEBI" id="CHEBI:65107"/>
        <dbReference type="ChEBI" id="CHEBI:78650"/>
    </reaction>
    <physiologicalReaction direction="left-to-right" evidence="1">
        <dbReference type="Rhea" id="RHEA:42141"/>
    </physiologicalReaction>
    <physiologicalReaction direction="right-to-left" evidence="1">
        <dbReference type="Rhea" id="RHEA:42142"/>
    </physiologicalReaction>
</comment>
<comment type="catalytic activity">
    <reaction evidence="2">
        <text>an N-acylsphing-4-enine + a 1,2-diacyl-sn-glycero-3-phosphoethanolamine = an N-acylsphing-4-enine 1-phosphoethanolamine + a 1,2-diacyl-sn-glycerol</text>
        <dbReference type="Rhea" id="RHEA:36079"/>
        <dbReference type="ChEBI" id="CHEBI:17815"/>
        <dbReference type="ChEBI" id="CHEBI:52639"/>
        <dbReference type="ChEBI" id="CHEBI:64612"/>
        <dbReference type="ChEBI" id="CHEBI:73203"/>
    </reaction>
    <physiologicalReaction direction="left-to-right" evidence="2">
        <dbReference type="Rhea" id="RHEA:36080"/>
    </physiologicalReaction>
</comment>
<comment type="pathway">
    <text evidence="1">Sphingolipid metabolism.</text>
</comment>
<comment type="subcellular location">
    <subcellularLocation>
        <location evidence="1">Golgi apparatus membrane</location>
        <topology evidence="3">Multi-pass membrane protein</topology>
    </subcellularLocation>
</comment>
<comment type="similarity">
    <text evidence="6">Belongs to the sphingomyelin synthase family.</text>
</comment>
<comment type="sequence caution" evidence="6">
    <conflict type="erroneous initiation">
        <sequence resource="EMBL-CDS" id="AAP37281"/>
    </conflict>
</comment>
<gene>
    <name type="primary">Sgms1</name>
    <name type="synonym">Mob</name>
    <name type="synonym">Tmem23</name>
</gene>